<gene>
    <name evidence="1" type="primary">asnS</name>
    <name type="ordered locus">APP7_0715</name>
</gene>
<dbReference type="EC" id="6.1.1.22" evidence="1"/>
<dbReference type="EMBL" id="CP001091">
    <property type="protein sequence ID" value="ACE61367.1"/>
    <property type="molecule type" value="Genomic_DNA"/>
</dbReference>
<dbReference type="RefSeq" id="WP_005617159.1">
    <property type="nucleotide sequence ID" value="NC_010939.1"/>
</dbReference>
<dbReference type="SMR" id="B3H198"/>
<dbReference type="KEGG" id="apa:APP7_0715"/>
<dbReference type="HOGENOM" id="CLU_004553_2_0_6"/>
<dbReference type="Proteomes" id="UP000001226">
    <property type="component" value="Chromosome"/>
</dbReference>
<dbReference type="GO" id="GO:0005737">
    <property type="term" value="C:cytoplasm"/>
    <property type="evidence" value="ECO:0007669"/>
    <property type="project" value="UniProtKB-SubCell"/>
</dbReference>
<dbReference type="GO" id="GO:0004816">
    <property type="term" value="F:asparagine-tRNA ligase activity"/>
    <property type="evidence" value="ECO:0007669"/>
    <property type="project" value="UniProtKB-UniRule"/>
</dbReference>
<dbReference type="GO" id="GO:0005524">
    <property type="term" value="F:ATP binding"/>
    <property type="evidence" value="ECO:0007669"/>
    <property type="project" value="UniProtKB-UniRule"/>
</dbReference>
<dbReference type="GO" id="GO:0003676">
    <property type="term" value="F:nucleic acid binding"/>
    <property type="evidence" value="ECO:0007669"/>
    <property type="project" value="InterPro"/>
</dbReference>
<dbReference type="GO" id="GO:0006421">
    <property type="term" value="P:asparaginyl-tRNA aminoacylation"/>
    <property type="evidence" value="ECO:0007669"/>
    <property type="project" value="UniProtKB-UniRule"/>
</dbReference>
<dbReference type="CDD" id="cd00776">
    <property type="entry name" value="AsxRS_core"/>
    <property type="match status" value="1"/>
</dbReference>
<dbReference type="CDD" id="cd04318">
    <property type="entry name" value="EcAsnRS_like_N"/>
    <property type="match status" value="1"/>
</dbReference>
<dbReference type="FunFam" id="3.30.930.10:FF:000016">
    <property type="entry name" value="Asparagine--tRNA ligase"/>
    <property type="match status" value="1"/>
</dbReference>
<dbReference type="Gene3D" id="3.30.930.10">
    <property type="entry name" value="Bira Bifunctional Protein, Domain 2"/>
    <property type="match status" value="1"/>
</dbReference>
<dbReference type="Gene3D" id="2.40.50.140">
    <property type="entry name" value="Nucleic acid-binding proteins"/>
    <property type="match status" value="1"/>
</dbReference>
<dbReference type="HAMAP" id="MF_00534">
    <property type="entry name" value="Asn_tRNA_synth"/>
    <property type="match status" value="1"/>
</dbReference>
<dbReference type="InterPro" id="IPR004364">
    <property type="entry name" value="Aa-tRNA-synt_II"/>
</dbReference>
<dbReference type="InterPro" id="IPR006195">
    <property type="entry name" value="aa-tRNA-synth_II"/>
</dbReference>
<dbReference type="InterPro" id="IPR045864">
    <property type="entry name" value="aa-tRNA-synth_II/BPL/LPL"/>
</dbReference>
<dbReference type="InterPro" id="IPR004522">
    <property type="entry name" value="Asn-tRNA-ligase"/>
</dbReference>
<dbReference type="InterPro" id="IPR002312">
    <property type="entry name" value="Asp/Asn-tRNA-synth_IIb"/>
</dbReference>
<dbReference type="InterPro" id="IPR012340">
    <property type="entry name" value="NA-bd_OB-fold"/>
</dbReference>
<dbReference type="InterPro" id="IPR004365">
    <property type="entry name" value="NA-bd_OB_tRNA"/>
</dbReference>
<dbReference type="NCBIfam" id="TIGR00457">
    <property type="entry name" value="asnS"/>
    <property type="match status" value="1"/>
</dbReference>
<dbReference type="NCBIfam" id="NF003037">
    <property type="entry name" value="PRK03932.1"/>
    <property type="match status" value="1"/>
</dbReference>
<dbReference type="PANTHER" id="PTHR22594:SF34">
    <property type="entry name" value="ASPARAGINE--TRNA LIGASE, MITOCHONDRIAL-RELATED"/>
    <property type="match status" value="1"/>
</dbReference>
<dbReference type="PANTHER" id="PTHR22594">
    <property type="entry name" value="ASPARTYL/LYSYL-TRNA SYNTHETASE"/>
    <property type="match status" value="1"/>
</dbReference>
<dbReference type="Pfam" id="PF00152">
    <property type="entry name" value="tRNA-synt_2"/>
    <property type="match status" value="1"/>
</dbReference>
<dbReference type="Pfam" id="PF01336">
    <property type="entry name" value="tRNA_anti-codon"/>
    <property type="match status" value="1"/>
</dbReference>
<dbReference type="PRINTS" id="PR01042">
    <property type="entry name" value="TRNASYNTHASP"/>
</dbReference>
<dbReference type="SUPFAM" id="SSF55681">
    <property type="entry name" value="Class II aaRS and biotin synthetases"/>
    <property type="match status" value="1"/>
</dbReference>
<dbReference type="SUPFAM" id="SSF50249">
    <property type="entry name" value="Nucleic acid-binding proteins"/>
    <property type="match status" value="1"/>
</dbReference>
<dbReference type="PROSITE" id="PS50862">
    <property type="entry name" value="AA_TRNA_LIGASE_II"/>
    <property type="match status" value="1"/>
</dbReference>
<reference key="1">
    <citation type="submission" date="2008-06" db="EMBL/GenBank/DDBJ databases">
        <title>Genome and proteome analysis of A. pleuropneumoniae serotype 7.</title>
        <authorList>
            <person name="Linke B."/>
            <person name="Buettner F."/>
            <person name="Martinez-Arias R."/>
            <person name="Goesmann A."/>
            <person name="Baltes N."/>
            <person name="Tegetmeyer H."/>
            <person name="Singh M."/>
            <person name="Gerlach G.F."/>
        </authorList>
    </citation>
    <scope>NUCLEOTIDE SEQUENCE [LARGE SCALE GENOMIC DNA]</scope>
    <source>
        <strain>AP76</strain>
    </source>
</reference>
<feature type="chain" id="PRO_1000211897" description="Asparagine--tRNA ligase">
    <location>
        <begin position="1"/>
        <end position="467"/>
    </location>
</feature>
<protein>
    <recommendedName>
        <fullName evidence="1">Asparagine--tRNA ligase</fullName>
        <ecNumber evidence="1">6.1.1.22</ecNumber>
    </recommendedName>
    <alternativeName>
        <fullName evidence="1">Asparaginyl-tRNA synthetase</fullName>
        <shortName evidence="1">AsnRS</shortName>
    </alternativeName>
</protein>
<proteinExistence type="inferred from homology"/>
<organism>
    <name type="scientific">Actinobacillus pleuropneumoniae serotype 7 (strain AP76)</name>
    <dbReference type="NCBI Taxonomy" id="537457"/>
    <lineage>
        <taxon>Bacteria</taxon>
        <taxon>Pseudomonadati</taxon>
        <taxon>Pseudomonadota</taxon>
        <taxon>Gammaproteobacteria</taxon>
        <taxon>Pasteurellales</taxon>
        <taxon>Pasteurellaceae</taxon>
        <taxon>Actinobacillus</taxon>
    </lineage>
</organism>
<name>SYN_ACTP7</name>
<evidence type="ECO:0000255" key="1">
    <source>
        <dbReference type="HAMAP-Rule" id="MF_00534"/>
    </source>
</evidence>
<keyword id="KW-0030">Aminoacyl-tRNA synthetase</keyword>
<keyword id="KW-0067">ATP-binding</keyword>
<keyword id="KW-0963">Cytoplasm</keyword>
<keyword id="KW-0436">Ligase</keyword>
<keyword id="KW-0547">Nucleotide-binding</keyword>
<keyword id="KW-0648">Protein biosynthesis</keyword>
<accession>B3H198</accession>
<sequence>MSKFPTVSEILSGKVAVGEEVAVRGWVRTRRDSKAGLSFLAVYDGSCFDPIQSIINNDLANYNDEVLRLTAGCSVIVTGKVVESPAEGQAVELHATHVEVVGWVEDPDTYPMAAKRHSIEYLREVAHLRPRTNLIGAVARVRHCLAQAIHRFFNEQGFYWVATPLITASDTEGAGEMFRVSTLDLENLPRTEEGKVDFSQDFFGKESFLTVSGQLNGETYACALSKVYTFGPTFRAENSNTTRHLAEFWMVEPEFAFATLADNAKLAEDMLKYVFKAVLEERKDDMQFFAKHIDKDVITRLENFIAAPFAQVDYTDAIEILLKSGKEFEFPVSWGIDLSSEHERFLAEEYFKSPVVVKNYPKDIKAFYMRLNDDGKTVAAMDVLAPGIGEIIGGSQREERLDVLDTRMVEMGLNPEDYWWYRDLRKYGTVPHSGFGLGFERLIVYVTGLQNIREVIPFPRAPRNANF</sequence>
<comment type="catalytic activity">
    <reaction evidence="1">
        <text>tRNA(Asn) + L-asparagine + ATP = L-asparaginyl-tRNA(Asn) + AMP + diphosphate + H(+)</text>
        <dbReference type="Rhea" id="RHEA:11180"/>
        <dbReference type="Rhea" id="RHEA-COMP:9659"/>
        <dbReference type="Rhea" id="RHEA-COMP:9674"/>
        <dbReference type="ChEBI" id="CHEBI:15378"/>
        <dbReference type="ChEBI" id="CHEBI:30616"/>
        <dbReference type="ChEBI" id="CHEBI:33019"/>
        <dbReference type="ChEBI" id="CHEBI:58048"/>
        <dbReference type="ChEBI" id="CHEBI:78442"/>
        <dbReference type="ChEBI" id="CHEBI:78515"/>
        <dbReference type="ChEBI" id="CHEBI:456215"/>
        <dbReference type="EC" id="6.1.1.22"/>
    </reaction>
</comment>
<comment type="subunit">
    <text evidence="1">Homodimer.</text>
</comment>
<comment type="subcellular location">
    <subcellularLocation>
        <location evidence="1">Cytoplasm</location>
    </subcellularLocation>
</comment>
<comment type="similarity">
    <text evidence="1">Belongs to the class-II aminoacyl-tRNA synthetase family.</text>
</comment>